<keyword id="KW-0249">Electron transport</keyword>
<keyword id="KW-0349">Heme</keyword>
<keyword id="KW-0408">Iron</keyword>
<keyword id="KW-0472">Membrane</keyword>
<keyword id="KW-0479">Metal-binding</keyword>
<keyword id="KW-0496">Mitochondrion</keyword>
<keyword id="KW-0999">Mitochondrion inner membrane</keyword>
<keyword id="KW-0679">Respiratory chain</keyword>
<keyword id="KW-0812">Transmembrane</keyword>
<keyword id="KW-1133">Transmembrane helix</keyword>
<keyword id="KW-0813">Transport</keyword>
<keyword id="KW-0830">Ubiquinone</keyword>
<proteinExistence type="inferred from homology"/>
<reference key="1">
    <citation type="submission" date="2000-12" db="EMBL/GenBank/DDBJ databases">
        <title>Phylogeny and systematics of myospalacinae (rodentia) inferred from mitochondrial genes sequences.</title>
        <authorList>
            <person name="Zhou C.Q."/>
            <person name="Zhou K.Y."/>
            <person name="Wang Y.Q."/>
            <person name="Zhang S.L."/>
        </authorList>
    </citation>
    <scope>NUCLEOTIDE SEQUENCE [GENOMIC DNA]</scope>
</reference>
<dbReference type="EMBL" id="AF326269">
    <property type="protein sequence ID" value="AAG48721.1"/>
    <property type="molecule type" value="Genomic_DNA"/>
</dbReference>
<dbReference type="SMR" id="Q9G3N2"/>
<dbReference type="GO" id="GO:0005743">
    <property type="term" value="C:mitochondrial inner membrane"/>
    <property type="evidence" value="ECO:0007669"/>
    <property type="project" value="UniProtKB-SubCell"/>
</dbReference>
<dbReference type="GO" id="GO:0045275">
    <property type="term" value="C:respiratory chain complex III"/>
    <property type="evidence" value="ECO:0007669"/>
    <property type="project" value="InterPro"/>
</dbReference>
<dbReference type="GO" id="GO:0046872">
    <property type="term" value="F:metal ion binding"/>
    <property type="evidence" value="ECO:0007669"/>
    <property type="project" value="UniProtKB-KW"/>
</dbReference>
<dbReference type="GO" id="GO:0008121">
    <property type="term" value="F:ubiquinol-cytochrome-c reductase activity"/>
    <property type="evidence" value="ECO:0007669"/>
    <property type="project" value="InterPro"/>
</dbReference>
<dbReference type="GO" id="GO:0006122">
    <property type="term" value="P:mitochondrial electron transport, ubiquinol to cytochrome c"/>
    <property type="evidence" value="ECO:0007669"/>
    <property type="project" value="TreeGrafter"/>
</dbReference>
<dbReference type="CDD" id="cd00290">
    <property type="entry name" value="cytochrome_b_C"/>
    <property type="match status" value="1"/>
</dbReference>
<dbReference type="CDD" id="cd00284">
    <property type="entry name" value="Cytochrome_b_N"/>
    <property type="match status" value="1"/>
</dbReference>
<dbReference type="FunFam" id="1.20.810.10:FF:000002">
    <property type="entry name" value="Cytochrome b"/>
    <property type="match status" value="1"/>
</dbReference>
<dbReference type="Gene3D" id="1.20.810.10">
    <property type="entry name" value="Cytochrome Bc1 Complex, Chain C"/>
    <property type="match status" value="1"/>
</dbReference>
<dbReference type="InterPro" id="IPR005798">
    <property type="entry name" value="Cyt_b/b6_C"/>
</dbReference>
<dbReference type="InterPro" id="IPR036150">
    <property type="entry name" value="Cyt_b/b6_C_sf"/>
</dbReference>
<dbReference type="InterPro" id="IPR005797">
    <property type="entry name" value="Cyt_b/b6_N"/>
</dbReference>
<dbReference type="InterPro" id="IPR027387">
    <property type="entry name" value="Cytb/b6-like_sf"/>
</dbReference>
<dbReference type="InterPro" id="IPR030689">
    <property type="entry name" value="Cytochrome_b"/>
</dbReference>
<dbReference type="InterPro" id="IPR048260">
    <property type="entry name" value="Cytochrome_b_C_euk/bac"/>
</dbReference>
<dbReference type="InterPro" id="IPR048259">
    <property type="entry name" value="Cytochrome_b_N_euk/bac"/>
</dbReference>
<dbReference type="InterPro" id="IPR016174">
    <property type="entry name" value="Di-haem_cyt_TM"/>
</dbReference>
<dbReference type="PANTHER" id="PTHR19271">
    <property type="entry name" value="CYTOCHROME B"/>
    <property type="match status" value="1"/>
</dbReference>
<dbReference type="PANTHER" id="PTHR19271:SF16">
    <property type="entry name" value="CYTOCHROME B"/>
    <property type="match status" value="1"/>
</dbReference>
<dbReference type="Pfam" id="PF00032">
    <property type="entry name" value="Cytochrom_B_C"/>
    <property type="match status" value="1"/>
</dbReference>
<dbReference type="Pfam" id="PF00033">
    <property type="entry name" value="Cytochrome_B"/>
    <property type="match status" value="1"/>
</dbReference>
<dbReference type="PIRSF" id="PIRSF038885">
    <property type="entry name" value="COB"/>
    <property type="match status" value="1"/>
</dbReference>
<dbReference type="SUPFAM" id="SSF81648">
    <property type="entry name" value="a domain/subunit of cytochrome bc1 complex (Ubiquinol-cytochrome c reductase)"/>
    <property type="match status" value="1"/>
</dbReference>
<dbReference type="SUPFAM" id="SSF81342">
    <property type="entry name" value="Transmembrane di-heme cytochromes"/>
    <property type="match status" value="1"/>
</dbReference>
<dbReference type="PROSITE" id="PS51003">
    <property type="entry name" value="CYTB_CTER"/>
    <property type="match status" value="1"/>
</dbReference>
<dbReference type="PROSITE" id="PS51002">
    <property type="entry name" value="CYTB_NTER"/>
    <property type="match status" value="1"/>
</dbReference>
<name>CYB_EOSRU</name>
<comment type="function">
    <text evidence="2">Component of the ubiquinol-cytochrome c reductase complex (complex III or cytochrome b-c1 complex) that is part of the mitochondrial respiratory chain. The b-c1 complex mediates electron transfer from ubiquinol to cytochrome c. Contributes to the generation of a proton gradient across the mitochondrial membrane that is then used for ATP synthesis.</text>
</comment>
<comment type="cofactor">
    <cofactor evidence="2">
        <name>heme b</name>
        <dbReference type="ChEBI" id="CHEBI:60344"/>
    </cofactor>
    <text evidence="2">Binds 2 heme b groups non-covalently.</text>
</comment>
<comment type="subunit">
    <text evidence="2">The cytochrome bc1 complex contains 11 subunits: 3 respiratory subunits (MT-CYB, CYC1 and UQCRFS1), 2 core proteins (UQCRC1 and UQCRC2) and 6 low-molecular weight proteins (UQCRH/QCR6, UQCRB/QCR7, UQCRQ/QCR8, UQCR10/QCR9, UQCR11/QCR10 and a cleavage product of UQCRFS1). This cytochrome bc1 complex then forms a dimer.</text>
</comment>
<comment type="subcellular location">
    <subcellularLocation>
        <location evidence="2">Mitochondrion inner membrane</location>
        <topology evidence="2">Multi-pass membrane protein</topology>
    </subcellularLocation>
</comment>
<comment type="miscellaneous">
    <text evidence="1">Heme 1 (or BL or b562) is low-potential and absorbs at about 562 nm, and heme 2 (or BH or b566) is high-potential and absorbs at about 566 nm.</text>
</comment>
<comment type="similarity">
    <text evidence="3 4">Belongs to the cytochrome b family.</text>
</comment>
<comment type="caution">
    <text evidence="2">The full-length protein contains only eight transmembrane helices, not nine as predicted by bioinformatics tools.</text>
</comment>
<evidence type="ECO:0000250" key="1"/>
<evidence type="ECO:0000250" key="2">
    <source>
        <dbReference type="UniProtKB" id="P00157"/>
    </source>
</evidence>
<evidence type="ECO:0000255" key="3">
    <source>
        <dbReference type="PROSITE-ProRule" id="PRU00967"/>
    </source>
</evidence>
<evidence type="ECO:0000255" key="4">
    <source>
        <dbReference type="PROSITE-ProRule" id="PRU00968"/>
    </source>
</evidence>
<geneLocation type="mitochondrion"/>
<organism>
    <name type="scientific">Eospalax rufescens</name>
    <name type="common">Zokor</name>
    <name type="synonym">Myospalax rufescens</name>
    <dbReference type="NCBI Taxonomy" id="146137"/>
    <lineage>
        <taxon>Eukaryota</taxon>
        <taxon>Metazoa</taxon>
        <taxon>Chordata</taxon>
        <taxon>Craniata</taxon>
        <taxon>Vertebrata</taxon>
        <taxon>Euteleostomi</taxon>
        <taxon>Mammalia</taxon>
        <taxon>Eutheria</taxon>
        <taxon>Euarchontoglires</taxon>
        <taxon>Glires</taxon>
        <taxon>Rodentia</taxon>
        <taxon>Myomorpha</taxon>
        <taxon>Muroidea</taxon>
        <taxon>Spalacidae</taxon>
        <taxon>Myospalacinae</taxon>
        <taxon>Eospalax</taxon>
    </lineage>
</organism>
<feature type="chain" id="PRO_0000255054" description="Cytochrome b">
    <location>
        <begin position="1"/>
        <end position="379"/>
    </location>
</feature>
<feature type="transmembrane region" description="Helical" evidence="2">
    <location>
        <begin position="33"/>
        <end position="53"/>
    </location>
</feature>
<feature type="transmembrane region" description="Helical" evidence="2">
    <location>
        <begin position="77"/>
        <end position="98"/>
    </location>
</feature>
<feature type="transmembrane region" description="Helical" evidence="2">
    <location>
        <begin position="113"/>
        <end position="133"/>
    </location>
</feature>
<feature type="transmembrane region" description="Helical" evidence="2">
    <location>
        <begin position="178"/>
        <end position="198"/>
    </location>
</feature>
<feature type="transmembrane region" description="Helical" evidence="2">
    <location>
        <begin position="226"/>
        <end position="246"/>
    </location>
</feature>
<feature type="transmembrane region" description="Helical" evidence="2">
    <location>
        <begin position="288"/>
        <end position="308"/>
    </location>
</feature>
<feature type="transmembrane region" description="Helical" evidence="2">
    <location>
        <begin position="320"/>
        <end position="340"/>
    </location>
</feature>
<feature type="transmembrane region" description="Helical" evidence="2">
    <location>
        <begin position="347"/>
        <end position="367"/>
    </location>
</feature>
<feature type="binding site" description="axial binding residue" evidence="2">
    <location>
        <position position="83"/>
    </location>
    <ligand>
        <name>heme b</name>
        <dbReference type="ChEBI" id="CHEBI:60344"/>
        <label>b562</label>
    </ligand>
    <ligandPart>
        <name>Fe</name>
        <dbReference type="ChEBI" id="CHEBI:18248"/>
    </ligandPart>
</feature>
<feature type="binding site" description="axial binding residue" evidence="2">
    <location>
        <position position="97"/>
    </location>
    <ligand>
        <name>heme b</name>
        <dbReference type="ChEBI" id="CHEBI:60344"/>
        <label>b566</label>
    </ligand>
    <ligandPart>
        <name>Fe</name>
        <dbReference type="ChEBI" id="CHEBI:18248"/>
    </ligandPart>
</feature>
<feature type="binding site" description="axial binding residue" evidence="2">
    <location>
        <position position="182"/>
    </location>
    <ligand>
        <name>heme b</name>
        <dbReference type="ChEBI" id="CHEBI:60344"/>
        <label>b562</label>
    </ligand>
    <ligandPart>
        <name>Fe</name>
        <dbReference type="ChEBI" id="CHEBI:18248"/>
    </ligandPart>
</feature>
<feature type="binding site" description="axial binding residue" evidence="2">
    <location>
        <position position="196"/>
    </location>
    <ligand>
        <name>heme b</name>
        <dbReference type="ChEBI" id="CHEBI:60344"/>
        <label>b566</label>
    </ligand>
    <ligandPart>
        <name>Fe</name>
        <dbReference type="ChEBI" id="CHEBI:18248"/>
    </ligandPart>
</feature>
<feature type="binding site" evidence="2">
    <location>
        <position position="201"/>
    </location>
    <ligand>
        <name>a ubiquinone</name>
        <dbReference type="ChEBI" id="CHEBI:16389"/>
    </ligand>
</feature>
<gene>
    <name type="primary">MT-CYB</name>
    <name type="synonym">COB</name>
    <name type="synonym">CYTB</name>
    <name type="synonym">MTCYB</name>
</gene>
<sequence length="379" mass="42657">MTNMRKSHPLLKIINHSLIDLPAPSNISVWWNFGSLLGVCLGLQILTGLFLAMHYTSDTLTAFSSVTHICRDVNYGWIIRYLHANGASMFFICLFLHVGRGMYYGSYSYLETWNIGVILLFAVMATAFMGYVLPWGQMSFWGATVITNLLSAIPYVGTSLVEWIWGGFSVDKATLTRFFAFHFILPFIITALVIVHLLFLHETGSNNPTGLNSNADKIPFHPYYTIKDILGFIVMFLFLMILVLFSPDMLGDPDNYTPANPLNTPPHIKPEWYFLFAYAILRSIPNKLGGVLALILSILVLVLLPLLHTSAQRSLMFRPISQCLFWILVADLFTLTWIGGQPVEHPFIIIGQLASILYFLIILGLMPLAGILENKIMKI</sequence>
<accession>Q9G3N2</accession>
<protein>
    <recommendedName>
        <fullName>Cytochrome b</fullName>
    </recommendedName>
    <alternativeName>
        <fullName>Complex III subunit 3</fullName>
    </alternativeName>
    <alternativeName>
        <fullName>Complex III subunit III</fullName>
    </alternativeName>
    <alternativeName>
        <fullName>Cytochrome b-c1 complex subunit 3</fullName>
    </alternativeName>
    <alternativeName>
        <fullName>Ubiquinol-cytochrome-c reductase complex cytochrome b subunit</fullName>
    </alternativeName>
</protein>